<dbReference type="EMBL" id="AE005674">
    <property type="protein sequence ID" value="AAN44724.1"/>
    <property type="status" value="ALT_INIT"/>
    <property type="molecule type" value="Genomic_DNA"/>
</dbReference>
<dbReference type="EMBL" id="AE014073">
    <property type="protein sequence ID" value="AAP18537.1"/>
    <property type="status" value="ALT_INIT"/>
    <property type="molecule type" value="Genomic_DNA"/>
</dbReference>
<dbReference type="RefSeq" id="NP_709017.3">
    <property type="nucleotide sequence ID" value="NC_004337.2"/>
</dbReference>
<dbReference type="RefSeq" id="WP_000108459.1">
    <property type="nucleotide sequence ID" value="NZ_WPGW01000176.1"/>
</dbReference>
<dbReference type="SMR" id="P59699"/>
<dbReference type="STRING" id="198214.SF3260"/>
<dbReference type="PaxDb" id="198214-SF3260"/>
<dbReference type="GeneID" id="1027083"/>
<dbReference type="GeneID" id="75206074"/>
<dbReference type="KEGG" id="sfl:SF3260"/>
<dbReference type="KEGG" id="sfx:S3477"/>
<dbReference type="PATRIC" id="fig|198214.7.peg.3863"/>
<dbReference type="HOGENOM" id="CLU_001265_46_8_6"/>
<dbReference type="Proteomes" id="UP000001006">
    <property type="component" value="Chromosome"/>
</dbReference>
<dbReference type="Proteomes" id="UP000002673">
    <property type="component" value="Chromosome"/>
</dbReference>
<dbReference type="GO" id="GO:0005886">
    <property type="term" value="C:plasma membrane"/>
    <property type="evidence" value="ECO:0007669"/>
    <property type="project" value="UniProtKB-SubCell"/>
</dbReference>
<dbReference type="GO" id="GO:0046943">
    <property type="term" value="F:carboxylic acid transmembrane transporter activity"/>
    <property type="evidence" value="ECO:0007669"/>
    <property type="project" value="TreeGrafter"/>
</dbReference>
<dbReference type="GO" id="GO:0015538">
    <property type="term" value="F:sialic acid:proton symporter activity"/>
    <property type="evidence" value="ECO:0007669"/>
    <property type="project" value="UniProtKB-UniRule"/>
</dbReference>
<dbReference type="CDD" id="cd17316">
    <property type="entry name" value="MFS_SV2_like"/>
    <property type="match status" value="1"/>
</dbReference>
<dbReference type="FunFam" id="1.20.1250.20:FF:000027">
    <property type="entry name" value="Sialic acid transporter NanT"/>
    <property type="match status" value="1"/>
</dbReference>
<dbReference type="FunFam" id="1.20.1250.20:FF:000038">
    <property type="entry name" value="Sialic acid transporter NanT"/>
    <property type="match status" value="1"/>
</dbReference>
<dbReference type="Gene3D" id="1.20.1250.20">
    <property type="entry name" value="MFS general substrate transporter like domains"/>
    <property type="match status" value="2"/>
</dbReference>
<dbReference type="HAMAP" id="MF_01238">
    <property type="entry name" value="MFS_NanT"/>
    <property type="match status" value="1"/>
</dbReference>
<dbReference type="InterPro" id="IPR011701">
    <property type="entry name" value="MFS"/>
</dbReference>
<dbReference type="InterPro" id="IPR020846">
    <property type="entry name" value="MFS_dom"/>
</dbReference>
<dbReference type="InterPro" id="IPR036259">
    <property type="entry name" value="MFS_trans_sf"/>
</dbReference>
<dbReference type="InterPro" id="IPR004742">
    <property type="entry name" value="SA_transporter"/>
</dbReference>
<dbReference type="NCBIfam" id="TIGR00891">
    <property type="entry name" value="2A0112"/>
    <property type="match status" value="1"/>
</dbReference>
<dbReference type="NCBIfam" id="NF003024">
    <property type="entry name" value="PRK03893.1"/>
    <property type="match status" value="1"/>
</dbReference>
<dbReference type="PANTHER" id="PTHR23508">
    <property type="entry name" value="CARBOXYLIC ACID TRANSPORTER PROTEIN HOMOLOG"/>
    <property type="match status" value="1"/>
</dbReference>
<dbReference type="PANTHER" id="PTHR23508:SF3">
    <property type="entry name" value="SIALIC ACID TRANSPORTER NANT"/>
    <property type="match status" value="1"/>
</dbReference>
<dbReference type="Pfam" id="PF07690">
    <property type="entry name" value="MFS_1"/>
    <property type="match status" value="1"/>
</dbReference>
<dbReference type="SUPFAM" id="SSF103473">
    <property type="entry name" value="MFS general substrate transporter"/>
    <property type="match status" value="1"/>
</dbReference>
<dbReference type="PROSITE" id="PS50850">
    <property type="entry name" value="MFS"/>
    <property type="match status" value="1"/>
</dbReference>
<protein>
    <recommendedName>
        <fullName evidence="1">Sialic acid transporter NanT</fullName>
    </recommendedName>
    <alternativeName>
        <fullName evidence="1">Sialic acid permease</fullName>
    </alternativeName>
    <alternativeName>
        <fullName evidence="1">Sialic acid/H(+) symporter</fullName>
    </alternativeName>
</protein>
<sequence>MSTTTQNIPWYRHLNRAQWRAFSAAWLGYLLDGFDFVLIALVLTEVQGEFGLTTVQAASLISAAFISRWFGGLMLGAMGDRYGRRLAMVTSIVLFSAGTLACGFAPGYITMFIARLVIGMGMAGEYGSSATYVIESWPKHLRNKASGFLISGFSVGAVVAAQVYSLVVPVWGWRALFFIGILPIIFALWLRKNIPEAEDWKEKHAGKAPVRTMVDILYRGEHRIANIVMTLAAATALWFCFAGNLQNAAIVAVLGLLCAAIFISFMVQSTGKRWPTGVMLMVVVLFAFLYSWPIQALLPTYLKTDLAYNPHTVANVLFFSGFGAAVGCCVGGFLGDWLGTRKAYVCSLLASQLLIIPVFAIGGANVWVLGLLLFFQQMLGQGIAGILPKLIGGYFDTDQRAAGLGFTYNVGALGGALAPIIGALIAQRLDLGTALASLSFSLTFVVILLIGLDMPSRVQRWLRPEALRTHDAIDGKPFSGAVPFGSAKNDLVKTKS</sequence>
<accession>P59699</accession>
<keyword id="KW-0997">Cell inner membrane</keyword>
<keyword id="KW-1003">Cell membrane</keyword>
<keyword id="KW-0472">Membrane</keyword>
<keyword id="KW-1185">Reference proteome</keyword>
<keyword id="KW-0762">Sugar transport</keyword>
<keyword id="KW-0812">Transmembrane</keyword>
<keyword id="KW-1133">Transmembrane helix</keyword>
<keyword id="KW-0813">Transport</keyword>
<reference key="1">
    <citation type="journal article" date="2002" name="Nucleic Acids Res.">
        <title>Genome sequence of Shigella flexneri 2a: insights into pathogenicity through comparison with genomes of Escherichia coli K12 and O157.</title>
        <authorList>
            <person name="Jin Q."/>
            <person name="Yuan Z."/>
            <person name="Xu J."/>
            <person name="Wang Y."/>
            <person name="Shen Y."/>
            <person name="Lu W."/>
            <person name="Wang J."/>
            <person name="Liu H."/>
            <person name="Yang J."/>
            <person name="Yang F."/>
            <person name="Zhang X."/>
            <person name="Zhang J."/>
            <person name="Yang G."/>
            <person name="Wu H."/>
            <person name="Qu D."/>
            <person name="Dong J."/>
            <person name="Sun L."/>
            <person name="Xue Y."/>
            <person name="Zhao A."/>
            <person name="Gao Y."/>
            <person name="Zhu J."/>
            <person name="Kan B."/>
            <person name="Ding K."/>
            <person name="Chen S."/>
            <person name="Cheng H."/>
            <person name="Yao Z."/>
            <person name="He B."/>
            <person name="Chen R."/>
            <person name="Ma D."/>
            <person name="Qiang B."/>
            <person name="Wen Y."/>
            <person name="Hou Y."/>
            <person name="Yu J."/>
        </authorList>
    </citation>
    <scope>NUCLEOTIDE SEQUENCE [LARGE SCALE GENOMIC DNA]</scope>
    <source>
        <strain>301 / Serotype 2a</strain>
    </source>
</reference>
<reference key="2">
    <citation type="journal article" date="2003" name="Infect. Immun.">
        <title>Complete genome sequence and comparative genomics of Shigella flexneri serotype 2a strain 2457T.</title>
        <authorList>
            <person name="Wei J."/>
            <person name="Goldberg M.B."/>
            <person name="Burland V."/>
            <person name="Venkatesan M.M."/>
            <person name="Deng W."/>
            <person name="Fournier G."/>
            <person name="Mayhew G.F."/>
            <person name="Plunkett G. III"/>
            <person name="Rose D.J."/>
            <person name="Darling A."/>
            <person name="Mau B."/>
            <person name="Perna N.T."/>
            <person name="Payne S.M."/>
            <person name="Runyen-Janecky L.J."/>
            <person name="Zhou S."/>
            <person name="Schwartz D.C."/>
            <person name="Blattner F.R."/>
        </authorList>
    </citation>
    <scope>NUCLEOTIDE SEQUENCE [LARGE SCALE GENOMIC DNA]</scope>
    <source>
        <strain>ATCC 700930 / 2457T / Serotype 2a</strain>
    </source>
</reference>
<comment type="function">
    <text evidence="1">Catalyzes the proton-dependent transport of sialic acid.</text>
</comment>
<comment type="catalytic activity">
    <reaction evidence="1">
        <text>N-acetylneuraminate(in) + H(+)(in) = N-acetylneuraminate(out) + H(+)(out)</text>
        <dbReference type="Rhea" id="RHEA:28987"/>
        <dbReference type="ChEBI" id="CHEBI:15378"/>
        <dbReference type="ChEBI" id="CHEBI:35418"/>
    </reaction>
</comment>
<comment type="subcellular location">
    <subcellularLocation>
        <location evidence="1">Cell inner membrane</location>
        <topology evidence="1">Multi-pass membrane protein</topology>
    </subcellularLocation>
</comment>
<comment type="similarity">
    <text evidence="1">Belongs to the major facilitator superfamily. Sialate:H(+) symporter (SHS) (TC 2.A.1.12) family.</text>
</comment>
<comment type="sequence caution" evidence="2">
    <conflict type="erroneous initiation">
        <sequence resource="EMBL-CDS" id="AAN44724"/>
    </conflict>
</comment>
<comment type="sequence caution" evidence="2">
    <conflict type="erroneous initiation">
        <sequence resource="EMBL-CDS" id="AAP18537"/>
    </conflict>
</comment>
<name>NANT_SHIFL</name>
<proteinExistence type="inferred from homology"/>
<evidence type="ECO:0000255" key="1">
    <source>
        <dbReference type="HAMAP-Rule" id="MF_01238"/>
    </source>
</evidence>
<evidence type="ECO:0000305" key="2"/>
<feature type="chain" id="PRO_0000050317" description="Sialic acid transporter NanT">
    <location>
        <begin position="1"/>
        <end position="496"/>
    </location>
</feature>
<feature type="transmembrane region" description="Helical" evidence="1">
    <location>
        <begin position="22"/>
        <end position="42"/>
    </location>
</feature>
<feature type="transmembrane region" description="Helical" evidence="1">
    <location>
        <begin position="58"/>
        <end position="78"/>
    </location>
</feature>
<feature type="transmembrane region" description="Helical" evidence="1">
    <location>
        <begin position="92"/>
        <end position="112"/>
    </location>
</feature>
<feature type="transmembrane region" description="Helical" evidence="1">
    <location>
        <begin position="116"/>
        <end position="136"/>
    </location>
</feature>
<feature type="transmembrane region" description="Helical" evidence="1">
    <location>
        <begin position="148"/>
        <end position="168"/>
    </location>
</feature>
<feature type="transmembrane region" description="Helical" evidence="1">
    <location>
        <begin position="170"/>
        <end position="190"/>
    </location>
</feature>
<feature type="transmembrane region" description="Helical" evidence="1">
    <location>
        <begin position="224"/>
        <end position="244"/>
    </location>
</feature>
<feature type="transmembrane region" description="Helical" evidence="1">
    <location>
        <begin position="247"/>
        <end position="267"/>
    </location>
</feature>
<feature type="transmembrane region" description="Helical" evidence="1">
    <location>
        <begin position="278"/>
        <end position="298"/>
    </location>
</feature>
<feature type="transmembrane region" description="Helical" evidence="1">
    <location>
        <begin position="313"/>
        <end position="333"/>
    </location>
</feature>
<feature type="transmembrane region" description="Helical" evidence="1">
    <location>
        <begin position="353"/>
        <end position="375"/>
    </location>
</feature>
<feature type="transmembrane region" description="Helical" evidence="1">
    <location>
        <begin position="406"/>
        <end position="426"/>
    </location>
</feature>
<feature type="transmembrane region" description="Helical" evidence="1">
    <location>
        <begin position="431"/>
        <end position="451"/>
    </location>
</feature>
<organism>
    <name type="scientific">Shigella flexneri</name>
    <dbReference type="NCBI Taxonomy" id="623"/>
    <lineage>
        <taxon>Bacteria</taxon>
        <taxon>Pseudomonadati</taxon>
        <taxon>Pseudomonadota</taxon>
        <taxon>Gammaproteobacteria</taxon>
        <taxon>Enterobacterales</taxon>
        <taxon>Enterobacteriaceae</taxon>
        <taxon>Shigella</taxon>
    </lineage>
</organism>
<gene>
    <name evidence="1" type="primary">nanT</name>
    <name type="ordered locus">SF3260</name>
    <name type="ordered locus">S3477</name>
</gene>